<gene>
    <name type="primary">ctrB</name>
    <name type="ordered locus">NMA0197</name>
</gene>
<sequence length="387" mass="43345">MSEQLPVAVATETKAERKKPKKKSWIKKLSPLFWVTVIIPTVISLVYFGFFASDRFTSQSSFVVRSPKSQSSLNGLGAILQGTGFARAQDDIYTVQEYMQSRSALDALRKKMPIRDFYEKEGDIFSRFNGFGLRGEDEAFYQYYRDKVSIHFDSVSGISNLSVTSFNAGESQKINDALLKQGEVLINQLNERARQDTIRYAQEVVNSAEEQVKEASVQLTKFRVSNGIFDLKAQSDVQMGLVSKLQDELIVIQTQLDQVKAVTPENPQIPGLIAREKSLRKEISQQMKAISGGGEGSLSNQAAEYQRVYLENELAEKQLAAAMTSLESAKAEADRQQLYLEVISQPNKPDLAYEPNRLYNIVATFVIGLIVYGIVVLLSASIREHKN</sequence>
<name>CTRB_NEIMA</name>
<accession>P57034</accession>
<accession>A1IP52</accession>
<keyword id="KW-0972">Capsule biogenesis/degradation</keyword>
<keyword id="KW-0997">Cell inner membrane</keyword>
<keyword id="KW-1003">Cell membrane</keyword>
<keyword id="KW-0472">Membrane</keyword>
<keyword id="KW-0625">Polysaccharide transport</keyword>
<keyword id="KW-0762">Sugar transport</keyword>
<keyword id="KW-0812">Transmembrane</keyword>
<keyword id="KW-1133">Transmembrane helix</keyword>
<keyword id="KW-0813">Transport</keyword>
<comment type="function">
    <text>May form an ATP-driven capsule polysaccharide export apparatus, in association with the CtrC and CtrD proteins.</text>
</comment>
<comment type="subcellular location">
    <subcellularLocation>
        <location evidence="2">Cell inner membrane</location>
        <topology evidence="2">Multi-pass membrane protein</topology>
    </subcellularLocation>
</comment>
<comment type="similarity">
    <text evidence="2">Belongs to the BexC/CtrB/KpsE family.</text>
</comment>
<protein>
    <recommendedName>
        <fullName>Capsule polysaccharide export inner-membrane protein CtrB</fullName>
    </recommendedName>
</protein>
<proteinExistence type="inferred from homology"/>
<dbReference type="EMBL" id="AL157959">
    <property type="protein sequence ID" value="CAM07511.1"/>
    <property type="molecule type" value="Genomic_DNA"/>
</dbReference>
<dbReference type="PIR" id="H82013">
    <property type="entry name" value="H82013"/>
</dbReference>
<dbReference type="RefSeq" id="WP_002236581.1">
    <property type="nucleotide sequence ID" value="NC_003116.1"/>
</dbReference>
<dbReference type="SMR" id="P57034"/>
<dbReference type="EnsemblBacteria" id="CAM07511">
    <property type="protein sequence ID" value="CAM07511"/>
    <property type="gene ID" value="NMA0197"/>
</dbReference>
<dbReference type="KEGG" id="nma:NMA0197"/>
<dbReference type="HOGENOM" id="CLU_027864_0_1_4"/>
<dbReference type="Proteomes" id="UP000000626">
    <property type="component" value="Chromosome"/>
</dbReference>
<dbReference type="GO" id="GO:0009276">
    <property type="term" value="C:Gram-negative-bacterium-type cell wall"/>
    <property type="evidence" value="ECO:0007669"/>
    <property type="project" value="InterPro"/>
</dbReference>
<dbReference type="GO" id="GO:0005886">
    <property type="term" value="C:plasma membrane"/>
    <property type="evidence" value="ECO:0007669"/>
    <property type="project" value="UniProtKB-SubCell"/>
</dbReference>
<dbReference type="GO" id="GO:0005351">
    <property type="term" value="F:carbohydrate:proton symporter activity"/>
    <property type="evidence" value="ECO:0007669"/>
    <property type="project" value="InterPro"/>
</dbReference>
<dbReference type="GO" id="GO:0004713">
    <property type="term" value="F:protein tyrosine kinase activity"/>
    <property type="evidence" value="ECO:0007669"/>
    <property type="project" value="TreeGrafter"/>
</dbReference>
<dbReference type="GO" id="GO:0015774">
    <property type="term" value="P:polysaccharide transport"/>
    <property type="evidence" value="ECO:0007669"/>
    <property type="project" value="UniProtKB-KW"/>
</dbReference>
<dbReference type="InterPro" id="IPR050445">
    <property type="entry name" value="Bact_polysacc_biosynth/exp"/>
</dbReference>
<dbReference type="InterPro" id="IPR005705">
    <property type="entry name" value="BexC_CtrB_KpsE_VexD"/>
</dbReference>
<dbReference type="NCBIfam" id="TIGR01010">
    <property type="entry name" value="BexC_CtrB_KpsE"/>
    <property type="match status" value="1"/>
</dbReference>
<dbReference type="PANTHER" id="PTHR32309:SF13">
    <property type="entry name" value="FERRIC ENTEROBACTIN TRANSPORT PROTEIN FEPE"/>
    <property type="match status" value="1"/>
</dbReference>
<dbReference type="PANTHER" id="PTHR32309">
    <property type="entry name" value="TYROSINE-PROTEIN KINASE"/>
    <property type="match status" value="1"/>
</dbReference>
<reference key="1">
    <citation type="journal article" date="2000" name="Nature">
        <title>Complete DNA sequence of a serogroup A strain of Neisseria meningitidis Z2491.</title>
        <authorList>
            <person name="Parkhill J."/>
            <person name="Achtman M."/>
            <person name="James K.D."/>
            <person name="Bentley S.D."/>
            <person name="Churcher C.M."/>
            <person name="Klee S.R."/>
            <person name="Morelli G."/>
            <person name="Basham D."/>
            <person name="Brown D."/>
            <person name="Chillingworth T."/>
            <person name="Davies R.M."/>
            <person name="Davis P."/>
            <person name="Devlin K."/>
            <person name="Feltwell T."/>
            <person name="Hamlin N."/>
            <person name="Holroyd S."/>
            <person name="Jagels K."/>
            <person name="Leather S."/>
            <person name="Moule S."/>
            <person name="Mungall K.L."/>
            <person name="Quail M.A."/>
            <person name="Rajandream M.A."/>
            <person name="Rutherford K.M."/>
            <person name="Simmonds M."/>
            <person name="Skelton J."/>
            <person name="Whitehead S."/>
            <person name="Spratt B.G."/>
            <person name="Barrell B.G."/>
        </authorList>
    </citation>
    <scope>NUCLEOTIDE SEQUENCE [LARGE SCALE GENOMIC DNA]</scope>
    <source>
        <strain>DSM 15465 / Z2491</strain>
    </source>
</reference>
<organism>
    <name type="scientific">Neisseria meningitidis serogroup A / serotype 4A (strain DSM 15465 / Z2491)</name>
    <dbReference type="NCBI Taxonomy" id="122587"/>
    <lineage>
        <taxon>Bacteria</taxon>
        <taxon>Pseudomonadati</taxon>
        <taxon>Pseudomonadota</taxon>
        <taxon>Betaproteobacteria</taxon>
        <taxon>Neisseriales</taxon>
        <taxon>Neisseriaceae</taxon>
        <taxon>Neisseria</taxon>
    </lineage>
</organism>
<feature type="chain" id="PRO_0000079497" description="Capsule polysaccharide export inner-membrane protein CtrB">
    <location>
        <begin position="1"/>
        <end position="387"/>
    </location>
</feature>
<feature type="transmembrane region" description="Helical" evidence="1">
    <location>
        <begin position="32"/>
        <end position="52"/>
    </location>
</feature>
<feature type="transmembrane region" description="Helical" evidence="1">
    <location>
        <begin position="358"/>
        <end position="378"/>
    </location>
</feature>
<evidence type="ECO:0000255" key="1"/>
<evidence type="ECO:0000305" key="2"/>